<comment type="function">
    <text evidence="2">Component of the ubiquinol-cytochrome c reductase complex (complex III or cytochrome b-c1 complex) that is part of the mitochondrial respiratory chain. The b-c1 complex mediates electron transfer from ubiquinol to cytochrome c. Contributes to the generation of a proton gradient across the mitochondrial membrane that is then used for ATP synthesis.</text>
</comment>
<comment type="cofactor">
    <cofactor evidence="2">
        <name>heme b</name>
        <dbReference type="ChEBI" id="CHEBI:60344"/>
    </cofactor>
    <text evidence="2">Binds 2 heme b groups non-covalently.</text>
</comment>
<comment type="subunit">
    <text evidence="2">The cytochrome bc1 complex contains 11 subunits: 3 respiratory subunits (MT-CYB, CYC1 and UQCRFS1), 2 core proteins (UQCRC1 and UQCRC2) and 6 low-molecular weight proteins (UQCRH/QCR6, UQCRB/QCR7, UQCRQ/QCR8, UQCR10/QCR9, UQCR11/QCR10 and a cleavage product of UQCRFS1). This cytochrome bc1 complex then forms a dimer.</text>
</comment>
<comment type="subcellular location">
    <subcellularLocation>
        <location evidence="2">Mitochondrion inner membrane</location>
        <topology evidence="2">Multi-pass membrane protein</topology>
    </subcellularLocation>
</comment>
<comment type="miscellaneous">
    <text evidence="1">Heme 1 (or BL or b562) is low-potential and absorbs at about 562 nm, and heme 2 (or BH or b566) is high-potential and absorbs at about 566 nm.</text>
</comment>
<comment type="similarity">
    <text evidence="3 4">Belongs to the cytochrome b family.</text>
</comment>
<comment type="caution">
    <text evidence="2">The full-length protein contains only eight transmembrane helices, not nine as predicted by bioinformatics tools.</text>
</comment>
<accession>O79223</accession>
<keyword id="KW-0249">Electron transport</keyword>
<keyword id="KW-0349">Heme</keyword>
<keyword id="KW-0408">Iron</keyword>
<keyword id="KW-0472">Membrane</keyword>
<keyword id="KW-0479">Metal-binding</keyword>
<keyword id="KW-0496">Mitochondrion</keyword>
<keyword id="KW-0999">Mitochondrion inner membrane</keyword>
<keyword id="KW-0679">Respiratory chain</keyword>
<keyword id="KW-0812">Transmembrane</keyword>
<keyword id="KW-1133">Transmembrane helix</keyword>
<keyword id="KW-0813">Transport</keyword>
<keyword id="KW-0830">Ubiquinone</keyword>
<organism>
    <name type="scientific">Procellaria westlandica</name>
    <name type="common">Westland petrel</name>
    <name type="synonym">Procellaria parkinsoni westlandica</name>
    <dbReference type="NCBI Taxonomy" id="37062"/>
    <lineage>
        <taxon>Eukaryota</taxon>
        <taxon>Metazoa</taxon>
        <taxon>Chordata</taxon>
        <taxon>Craniata</taxon>
        <taxon>Vertebrata</taxon>
        <taxon>Euteleostomi</taxon>
        <taxon>Archelosauria</taxon>
        <taxon>Archosauria</taxon>
        <taxon>Dinosauria</taxon>
        <taxon>Saurischia</taxon>
        <taxon>Theropoda</taxon>
        <taxon>Coelurosauria</taxon>
        <taxon>Aves</taxon>
        <taxon>Neognathae</taxon>
        <taxon>Neoaves</taxon>
        <taxon>Aequornithes</taxon>
        <taxon>Procellariiformes</taxon>
        <taxon>Procellariidae</taxon>
        <taxon>Procellaria</taxon>
    </lineage>
</organism>
<reference key="1">
    <citation type="journal article" date="1998" name="Mol. Biol. Evol.">
        <title>Body size effects and rates of cytochrome-b evolution in tube-nosed seabirds.</title>
        <authorList>
            <person name="Nunn G.B."/>
            <person name="Stanley S.E."/>
        </authorList>
    </citation>
    <scope>NUCLEOTIDE SEQUENCE [GENOMIC DNA]</scope>
    <source>
        <strain>Isolate WESTBP-1</strain>
    </source>
</reference>
<feature type="chain" id="PRO_0000061446" description="Cytochrome b">
    <location>
        <begin position="1"/>
        <end position="380"/>
    </location>
</feature>
<feature type="transmembrane region" description="Helical" evidence="2">
    <location>
        <begin position="34"/>
        <end position="54"/>
    </location>
</feature>
<feature type="transmembrane region" description="Helical" evidence="2">
    <location>
        <begin position="78"/>
        <end position="99"/>
    </location>
</feature>
<feature type="transmembrane region" description="Helical" evidence="2">
    <location>
        <begin position="114"/>
        <end position="134"/>
    </location>
</feature>
<feature type="transmembrane region" description="Helical" evidence="2">
    <location>
        <begin position="179"/>
        <end position="199"/>
    </location>
</feature>
<feature type="transmembrane region" description="Helical" evidence="2">
    <location>
        <begin position="227"/>
        <end position="247"/>
    </location>
</feature>
<feature type="transmembrane region" description="Helical" evidence="2">
    <location>
        <begin position="289"/>
        <end position="309"/>
    </location>
</feature>
<feature type="transmembrane region" description="Helical" evidence="2">
    <location>
        <begin position="321"/>
        <end position="341"/>
    </location>
</feature>
<feature type="transmembrane region" description="Helical" evidence="2">
    <location>
        <begin position="348"/>
        <end position="368"/>
    </location>
</feature>
<feature type="binding site" description="axial binding residue" evidence="2">
    <location>
        <position position="84"/>
    </location>
    <ligand>
        <name>heme b</name>
        <dbReference type="ChEBI" id="CHEBI:60344"/>
        <label>b562</label>
    </ligand>
    <ligandPart>
        <name>Fe</name>
        <dbReference type="ChEBI" id="CHEBI:18248"/>
    </ligandPart>
</feature>
<feature type="binding site" description="axial binding residue" evidence="2">
    <location>
        <position position="98"/>
    </location>
    <ligand>
        <name>heme b</name>
        <dbReference type="ChEBI" id="CHEBI:60344"/>
        <label>b566</label>
    </ligand>
    <ligandPart>
        <name>Fe</name>
        <dbReference type="ChEBI" id="CHEBI:18248"/>
    </ligandPart>
</feature>
<feature type="binding site" description="axial binding residue" evidence="2">
    <location>
        <position position="183"/>
    </location>
    <ligand>
        <name>heme b</name>
        <dbReference type="ChEBI" id="CHEBI:60344"/>
        <label>b562</label>
    </ligand>
    <ligandPart>
        <name>Fe</name>
        <dbReference type="ChEBI" id="CHEBI:18248"/>
    </ligandPart>
</feature>
<feature type="binding site" description="axial binding residue" evidence="2">
    <location>
        <position position="197"/>
    </location>
    <ligand>
        <name>heme b</name>
        <dbReference type="ChEBI" id="CHEBI:60344"/>
        <label>b566</label>
    </ligand>
    <ligandPart>
        <name>Fe</name>
        <dbReference type="ChEBI" id="CHEBI:18248"/>
    </ligandPart>
</feature>
<feature type="binding site" evidence="2">
    <location>
        <position position="202"/>
    </location>
    <ligand>
        <name>a ubiquinone</name>
        <dbReference type="ChEBI" id="CHEBI:16389"/>
    </ligand>
</feature>
<dbReference type="EMBL" id="AF076078">
    <property type="protein sequence ID" value="AAC68635.1"/>
    <property type="molecule type" value="Genomic_DNA"/>
</dbReference>
<dbReference type="SMR" id="O79223"/>
<dbReference type="GO" id="GO:0005743">
    <property type="term" value="C:mitochondrial inner membrane"/>
    <property type="evidence" value="ECO:0007669"/>
    <property type="project" value="UniProtKB-SubCell"/>
</dbReference>
<dbReference type="GO" id="GO:0045275">
    <property type="term" value="C:respiratory chain complex III"/>
    <property type="evidence" value="ECO:0007669"/>
    <property type="project" value="InterPro"/>
</dbReference>
<dbReference type="GO" id="GO:0046872">
    <property type="term" value="F:metal ion binding"/>
    <property type="evidence" value="ECO:0007669"/>
    <property type="project" value="UniProtKB-KW"/>
</dbReference>
<dbReference type="GO" id="GO:0008121">
    <property type="term" value="F:ubiquinol-cytochrome-c reductase activity"/>
    <property type="evidence" value="ECO:0007669"/>
    <property type="project" value="InterPro"/>
</dbReference>
<dbReference type="GO" id="GO:0006122">
    <property type="term" value="P:mitochondrial electron transport, ubiquinol to cytochrome c"/>
    <property type="evidence" value="ECO:0007669"/>
    <property type="project" value="TreeGrafter"/>
</dbReference>
<dbReference type="CDD" id="cd00290">
    <property type="entry name" value="cytochrome_b_C"/>
    <property type="match status" value="1"/>
</dbReference>
<dbReference type="CDD" id="cd00284">
    <property type="entry name" value="Cytochrome_b_N"/>
    <property type="match status" value="1"/>
</dbReference>
<dbReference type="FunFam" id="1.20.810.10:FF:000002">
    <property type="entry name" value="Cytochrome b"/>
    <property type="match status" value="1"/>
</dbReference>
<dbReference type="Gene3D" id="1.20.810.10">
    <property type="entry name" value="Cytochrome Bc1 Complex, Chain C"/>
    <property type="match status" value="1"/>
</dbReference>
<dbReference type="InterPro" id="IPR005798">
    <property type="entry name" value="Cyt_b/b6_C"/>
</dbReference>
<dbReference type="InterPro" id="IPR036150">
    <property type="entry name" value="Cyt_b/b6_C_sf"/>
</dbReference>
<dbReference type="InterPro" id="IPR005797">
    <property type="entry name" value="Cyt_b/b6_N"/>
</dbReference>
<dbReference type="InterPro" id="IPR027387">
    <property type="entry name" value="Cytb/b6-like_sf"/>
</dbReference>
<dbReference type="InterPro" id="IPR030689">
    <property type="entry name" value="Cytochrome_b"/>
</dbReference>
<dbReference type="InterPro" id="IPR048260">
    <property type="entry name" value="Cytochrome_b_C_euk/bac"/>
</dbReference>
<dbReference type="InterPro" id="IPR048259">
    <property type="entry name" value="Cytochrome_b_N_euk/bac"/>
</dbReference>
<dbReference type="InterPro" id="IPR016174">
    <property type="entry name" value="Di-haem_cyt_TM"/>
</dbReference>
<dbReference type="PANTHER" id="PTHR19271">
    <property type="entry name" value="CYTOCHROME B"/>
    <property type="match status" value="1"/>
</dbReference>
<dbReference type="PANTHER" id="PTHR19271:SF16">
    <property type="entry name" value="CYTOCHROME B"/>
    <property type="match status" value="1"/>
</dbReference>
<dbReference type="Pfam" id="PF00032">
    <property type="entry name" value="Cytochrom_B_C"/>
    <property type="match status" value="1"/>
</dbReference>
<dbReference type="Pfam" id="PF00033">
    <property type="entry name" value="Cytochrome_B"/>
    <property type="match status" value="1"/>
</dbReference>
<dbReference type="PIRSF" id="PIRSF038885">
    <property type="entry name" value="COB"/>
    <property type="match status" value="1"/>
</dbReference>
<dbReference type="SUPFAM" id="SSF81648">
    <property type="entry name" value="a domain/subunit of cytochrome bc1 complex (Ubiquinol-cytochrome c reductase)"/>
    <property type="match status" value="1"/>
</dbReference>
<dbReference type="SUPFAM" id="SSF81342">
    <property type="entry name" value="Transmembrane di-heme cytochromes"/>
    <property type="match status" value="1"/>
</dbReference>
<dbReference type="PROSITE" id="PS51003">
    <property type="entry name" value="CYTB_CTER"/>
    <property type="match status" value="1"/>
</dbReference>
<dbReference type="PROSITE" id="PS51002">
    <property type="entry name" value="CYTB_NTER"/>
    <property type="match status" value="1"/>
</dbReference>
<evidence type="ECO:0000250" key="1"/>
<evidence type="ECO:0000250" key="2">
    <source>
        <dbReference type="UniProtKB" id="P00157"/>
    </source>
</evidence>
<evidence type="ECO:0000255" key="3">
    <source>
        <dbReference type="PROSITE-ProRule" id="PRU00967"/>
    </source>
</evidence>
<evidence type="ECO:0000255" key="4">
    <source>
        <dbReference type="PROSITE-ProRule" id="PRU00968"/>
    </source>
</evidence>
<proteinExistence type="inferred from homology"/>
<protein>
    <recommendedName>
        <fullName>Cytochrome b</fullName>
    </recommendedName>
    <alternativeName>
        <fullName>Complex III subunit 3</fullName>
    </alternativeName>
    <alternativeName>
        <fullName>Complex III subunit III</fullName>
    </alternativeName>
    <alternativeName>
        <fullName>Cytochrome b-c1 complex subunit 3</fullName>
    </alternativeName>
    <alternativeName>
        <fullName>Ubiquinol-cytochrome-c reductase complex cytochrome b subunit</fullName>
    </alternativeName>
</protein>
<geneLocation type="mitochondrion"/>
<sequence length="380" mass="42703">MAPNLRKSHPLLKMVNNSLIDLPTPPNISAWWNFGSLLGICLMTQILTGLLLAMHYTADTTLAFSSVAHTCRNVQYGWLIRNLHANGASFFFICIYLHIGRGFYYGSYLYKETWNTGVILLLTLMATAFVGYVLPWGQMSFWGATVITNLFSAIPYIGQTLVEWAWGGFSVDNPTLTRFFALHFLLPFMIAGLTLVHLTFLHESGSNNPLGIVSNCDKIPFHPYFTLKDILGFTLMFLLLTTLALFSPNLLGDPENFTPANPLVTPPHIKPEWYFLFAYAILRSIPNKLGGVLALAASVLILFLAPFLHKAKQRAMTFRPLSQLLFWVLVANLFILTWVGSQPVEHPFIIIGQLASFTYFTILLILFPIIGALENKMLNY</sequence>
<gene>
    <name type="primary">MT-CYB</name>
    <name type="synonym">COB</name>
    <name type="synonym">CYTB</name>
    <name type="synonym">MTCYB</name>
</gene>
<name>CYB_PROWE</name>